<feature type="chain" id="PRO_0000129233" description="Large ribosomal subunit protein uL4">
    <location>
        <begin position="1"/>
        <end position="207"/>
    </location>
</feature>
<feature type="region of interest" description="Disordered" evidence="2">
    <location>
        <begin position="47"/>
        <end position="78"/>
    </location>
</feature>
<feature type="compositionally biased region" description="Basic residues" evidence="2">
    <location>
        <begin position="60"/>
        <end position="71"/>
    </location>
</feature>
<evidence type="ECO:0000255" key="1">
    <source>
        <dbReference type="HAMAP-Rule" id="MF_01328"/>
    </source>
</evidence>
<evidence type="ECO:0000256" key="2">
    <source>
        <dbReference type="SAM" id="MobiDB-lite"/>
    </source>
</evidence>
<evidence type="ECO:0000305" key="3"/>
<reference key="1">
    <citation type="journal article" date="2004" name="Nucleic Acids Res.">
        <title>Whole genome comparisons of serotype 4b and 1/2a strains of the food-borne pathogen Listeria monocytogenes reveal new insights into the core genome components of this species.</title>
        <authorList>
            <person name="Nelson K.E."/>
            <person name="Fouts D.E."/>
            <person name="Mongodin E.F."/>
            <person name="Ravel J."/>
            <person name="DeBoy R.T."/>
            <person name="Kolonay J.F."/>
            <person name="Rasko D.A."/>
            <person name="Angiuoli S.V."/>
            <person name="Gill S.R."/>
            <person name="Paulsen I.T."/>
            <person name="Peterson J.D."/>
            <person name="White O."/>
            <person name="Nelson W.C."/>
            <person name="Nierman W.C."/>
            <person name="Beanan M.J."/>
            <person name="Brinkac L.M."/>
            <person name="Daugherty S.C."/>
            <person name="Dodson R.J."/>
            <person name="Durkin A.S."/>
            <person name="Madupu R."/>
            <person name="Haft D.H."/>
            <person name="Selengut J."/>
            <person name="Van Aken S.E."/>
            <person name="Khouri H.M."/>
            <person name="Fedorova N."/>
            <person name="Forberger H.A."/>
            <person name="Tran B."/>
            <person name="Kathariou S."/>
            <person name="Wonderling L.D."/>
            <person name="Uhlich G.A."/>
            <person name="Bayles D.O."/>
            <person name="Luchansky J.B."/>
            <person name="Fraser C.M."/>
        </authorList>
    </citation>
    <scope>NUCLEOTIDE SEQUENCE [LARGE SCALE GENOMIC DNA]</scope>
    <source>
        <strain>F2365</strain>
    </source>
</reference>
<protein>
    <recommendedName>
        <fullName evidence="1">Large ribosomal subunit protein uL4</fullName>
    </recommendedName>
    <alternativeName>
        <fullName evidence="3">50S ribosomal protein L4</fullName>
    </alternativeName>
</protein>
<dbReference type="EMBL" id="AE017262">
    <property type="protein sequence ID" value="AAT05369.1"/>
    <property type="molecule type" value="Genomic_DNA"/>
</dbReference>
<dbReference type="RefSeq" id="WP_003727695.1">
    <property type="nucleotide sequence ID" value="NC_002973.6"/>
</dbReference>
<dbReference type="SMR" id="Q71WE7"/>
<dbReference type="GeneID" id="93240512"/>
<dbReference type="KEGG" id="lmf:LMOf2365_2604"/>
<dbReference type="HOGENOM" id="CLU_041575_5_2_9"/>
<dbReference type="GO" id="GO:1990904">
    <property type="term" value="C:ribonucleoprotein complex"/>
    <property type="evidence" value="ECO:0007669"/>
    <property type="project" value="UniProtKB-KW"/>
</dbReference>
<dbReference type="GO" id="GO:0005840">
    <property type="term" value="C:ribosome"/>
    <property type="evidence" value="ECO:0007669"/>
    <property type="project" value="UniProtKB-KW"/>
</dbReference>
<dbReference type="GO" id="GO:0019843">
    <property type="term" value="F:rRNA binding"/>
    <property type="evidence" value="ECO:0007669"/>
    <property type="project" value="UniProtKB-UniRule"/>
</dbReference>
<dbReference type="GO" id="GO:0003735">
    <property type="term" value="F:structural constituent of ribosome"/>
    <property type="evidence" value="ECO:0007669"/>
    <property type="project" value="InterPro"/>
</dbReference>
<dbReference type="GO" id="GO:0006412">
    <property type="term" value="P:translation"/>
    <property type="evidence" value="ECO:0007669"/>
    <property type="project" value="UniProtKB-UniRule"/>
</dbReference>
<dbReference type="FunFam" id="3.40.1370.10:FF:000003">
    <property type="entry name" value="50S ribosomal protein L4"/>
    <property type="match status" value="1"/>
</dbReference>
<dbReference type="Gene3D" id="3.40.1370.10">
    <property type="match status" value="1"/>
</dbReference>
<dbReference type="HAMAP" id="MF_01328_B">
    <property type="entry name" value="Ribosomal_uL4_B"/>
    <property type="match status" value="1"/>
</dbReference>
<dbReference type="InterPro" id="IPR002136">
    <property type="entry name" value="Ribosomal_uL4"/>
</dbReference>
<dbReference type="InterPro" id="IPR013005">
    <property type="entry name" value="Ribosomal_uL4-like"/>
</dbReference>
<dbReference type="InterPro" id="IPR023574">
    <property type="entry name" value="Ribosomal_uL4_dom_sf"/>
</dbReference>
<dbReference type="NCBIfam" id="TIGR03953">
    <property type="entry name" value="rplD_bact"/>
    <property type="match status" value="1"/>
</dbReference>
<dbReference type="PANTHER" id="PTHR10746">
    <property type="entry name" value="50S RIBOSOMAL PROTEIN L4"/>
    <property type="match status" value="1"/>
</dbReference>
<dbReference type="PANTHER" id="PTHR10746:SF6">
    <property type="entry name" value="LARGE RIBOSOMAL SUBUNIT PROTEIN UL4M"/>
    <property type="match status" value="1"/>
</dbReference>
<dbReference type="Pfam" id="PF00573">
    <property type="entry name" value="Ribosomal_L4"/>
    <property type="match status" value="1"/>
</dbReference>
<dbReference type="SUPFAM" id="SSF52166">
    <property type="entry name" value="Ribosomal protein L4"/>
    <property type="match status" value="1"/>
</dbReference>
<keyword id="KW-0687">Ribonucleoprotein</keyword>
<keyword id="KW-0689">Ribosomal protein</keyword>
<keyword id="KW-0694">RNA-binding</keyword>
<keyword id="KW-0699">rRNA-binding</keyword>
<gene>
    <name evidence="1" type="primary">rplD</name>
    <name type="ordered locus">LMOf2365_2604</name>
</gene>
<accession>Q71WE7</accession>
<organism>
    <name type="scientific">Listeria monocytogenes serotype 4b (strain F2365)</name>
    <dbReference type="NCBI Taxonomy" id="265669"/>
    <lineage>
        <taxon>Bacteria</taxon>
        <taxon>Bacillati</taxon>
        <taxon>Bacillota</taxon>
        <taxon>Bacilli</taxon>
        <taxon>Bacillales</taxon>
        <taxon>Listeriaceae</taxon>
        <taxon>Listeria</taxon>
    </lineage>
</organism>
<sequence>MPKLSLLKQDGTNAGEITLNDTVFGIEPNEKVVVDVILSQRASLRQGTHKVKNRSEVRGGGRKPWRQKGTGRARQGSIRSPQWRGGGVVFGPTPRSYAYKLPKKVRRLAIKSILSSKVNEEKLVVLEGLTFDAPKTKEFAAFLKNISVDTKALIVVAGESENVELSARNLQGITVIPAESISVLEVAKHDKLIITKAAVEKVEEVLA</sequence>
<proteinExistence type="inferred from homology"/>
<name>RL4_LISMF</name>
<comment type="function">
    <text evidence="1">One of the primary rRNA binding proteins, this protein initially binds near the 5'-end of the 23S rRNA. It is important during the early stages of 50S assembly. It makes multiple contacts with different domains of the 23S rRNA in the assembled 50S subunit and ribosome.</text>
</comment>
<comment type="function">
    <text evidence="1">Forms part of the polypeptide exit tunnel.</text>
</comment>
<comment type="subunit">
    <text evidence="1">Part of the 50S ribosomal subunit.</text>
</comment>
<comment type="similarity">
    <text evidence="1">Belongs to the universal ribosomal protein uL4 family.</text>
</comment>